<organism>
    <name type="scientific">Mus musculus</name>
    <name type="common">Mouse</name>
    <dbReference type="NCBI Taxonomy" id="10090"/>
    <lineage>
        <taxon>Eukaryota</taxon>
        <taxon>Metazoa</taxon>
        <taxon>Chordata</taxon>
        <taxon>Craniata</taxon>
        <taxon>Vertebrata</taxon>
        <taxon>Euteleostomi</taxon>
        <taxon>Mammalia</taxon>
        <taxon>Eutheria</taxon>
        <taxon>Euarchontoglires</taxon>
        <taxon>Glires</taxon>
        <taxon>Rodentia</taxon>
        <taxon>Myomorpha</taxon>
        <taxon>Muroidea</taxon>
        <taxon>Muridae</taxon>
        <taxon>Murinae</taxon>
        <taxon>Mus</taxon>
        <taxon>Mus</taxon>
    </lineage>
</organism>
<feature type="chain" id="PRO_0000282958" description="Cytochrome P450 2C54">
    <location>
        <begin position="1"/>
        <end position="490"/>
    </location>
</feature>
<feature type="binding site" description="axial binding residue" evidence="3">
    <location>
        <position position="435"/>
    </location>
    <ligand>
        <name>heme</name>
        <dbReference type="ChEBI" id="CHEBI:30413"/>
    </ligand>
    <ligandPart>
        <name>Fe</name>
        <dbReference type="ChEBI" id="CHEBI:18248"/>
    </ligandPart>
</feature>
<feature type="modified residue" description="Phosphoserine" evidence="2">
    <location>
        <position position="127"/>
    </location>
</feature>
<feature type="modified residue" description="N6-acetyllysine" evidence="4">
    <location>
        <position position="252"/>
    </location>
</feature>
<feature type="modified residue" description="N6-acetyllysine" evidence="4">
    <location>
        <position position="375"/>
    </location>
</feature>
<accession>Q6XVG2</accession>
<proteinExistence type="evidence at protein level"/>
<dbReference type="EC" id="1.14.14.1" evidence="6"/>
<dbReference type="EMBL" id="AY206874">
    <property type="protein sequence ID" value="AAO52737.1"/>
    <property type="molecule type" value="mRNA"/>
</dbReference>
<dbReference type="CCDS" id="CCDS29800.1"/>
<dbReference type="RefSeq" id="NP_996260.1">
    <property type="nucleotide sequence ID" value="NM_206537.2"/>
</dbReference>
<dbReference type="SMR" id="Q6XVG2"/>
<dbReference type="BioGRID" id="240101">
    <property type="interactions" value="36"/>
</dbReference>
<dbReference type="FunCoup" id="Q6XVG2">
    <property type="interactions" value="1003"/>
</dbReference>
<dbReference type="STRING" id="10090.ENSMUSP00000048284"/>
<dbReference type="GlyGen" id="Q6XVG2">
    <property type="glycosylation" value="1 site"/>
</dbReference>
<dbReference type="iPTMnet" id="Q6XVG2"/>
<dbReference type="PhosphoSitePlus" id="Q6XVG2"/>
<dbReference type="SwissPalm" id="Q6XVG2"/>
<dbReference type="jPOST" id="Q6XVG2"/>
<dbReference type="PaxDb" id="10090-ENSMUSP00000048284"/>
<dbReference type="PeptideAtlas" id="Q6XVG2"/>
<dbReference type="ProteomicsDB" id="285275"/>
<dbReference type="DNASU" id="404195"/>
<dbReference type="Ensembl" id="ENSMUST00000048959.5">
    <property type="protein sequence ID" value="ENSMUSP00000048284.4"/>
    <property type="gene ID" value="ENSMUSG00000067225.3"/>
</dbReference>
<dbReference type="GeneID" id="404195"/>
<dbReference type="KEGG" id="mmu:404195"/>
<dbReference type="UCSC" id="uc012bln.1">
    <property type="organism name" value="mouse"/>
</dbReference>
<dbReference type="AGR" id="MGI:3642960"/>
<dbReference type="CTD" id="404195"/>
<dbReference type="MGI" id="MGI:3642960">
    <property type="gene designation" value="Cyp2c54"/>
</dbReference>
<dbReference type="VEuPathDB" id="HostDB:ENSMUSG00000067225"/>
<dbReference type="eggNOG" id="KOG0156">
    <property type="taxonomic scope" value="Eukaryota"/>
</dbReference>
<dbReference type="GeneTree" id="ENSGT00940000155736"/>
<dbReference type="HOGENOM" id="CLU_001570_22_3_1"/>
<dbReference type="InParanoid" id="Q6XVG2"/>
<dbReference type="OMA" id="WLEHFKT"/>
<dbReference type="OrthoDB" id="1103324at2759"/>
<dbReference type="PhylomeDB" id="Q6XVG2"/>
<dbReference type="TreeFam" id="TF352043"/>
<dbReference type="BioGRID-ORCS" id="404195">
    <property type="hits" value="3 hits in 45 CRISPR screens"/>
</dbReference>
<dbReference type="PRO" id="PR:Q6XVG2"/>
<dbReference type="Proteomes" id="UP000000589">
    <property type="component" value="Chromosome 19"/>
</dbReference>
<dbReference type="RNAct" id="Q6XVG2">
    <property type="molecule type" value="protein"/>
</dbReference>
<dbReference type="Bgee" id="ENSMUSG00000067225">
    <property type="expression patterns" value="Expressed in left lobe of liver and 26 other cell types or tissues"/>
</dbReference>
<dbReference type="GO" id="GO:0005789">
    <property type="term" value="C:endoplasmic reticulum membrane"/>
    <property type="evidence" value="ECO:0007669"/>
    <property type="project" value="UniProtKB-SubCell"/>
</dbReference>
<dbReference type="GO" id="GO:0008392">
    <property type="term" value="F:arachidonate epoxygenase activity"/>
    <property type="evidence" value="ECO:0000314"/>
    <property type="project" value="MGI"/>
</dbReference>
<dbReference type="GO" id="GO:0020037">
    <property type="term" value="F:heme binding"/>
    <property type="evidence" value="ECO:0007669"/>
    <property type="project" value="InterPro"/>
</dbReference>
<dbReference type="GO" id="GO:0005506">
    <property type="term" value="F:iron ion binding"/>
    <property type="evidence" value="ECO:0007669"/>
    <property type="project" value="InterPro"/>
</dbReference>
<dbReference type="GO" id="GO:0071614">
    <property type="term" value="F:linoleic acid epoxygenase activity"/>
    <property type="evidence" value="ECO:0000314"/>
    <property type="project" value="MGI"/>
</dbReference>
<dbReference type="GO" id="GO:0016712">
    <property type="term" value="F:oxidoreductase activity, acting on paired donors, with incorporation or reduction of molecular oxygen, reduced flavin or flavoprotein as one donor, and incorporation of one atom of oxygen"/>
    <property type="evidence" value="ECO:0007669"/>
    <property type="project" value="UniProtKB-EC"/>
</dbReference>
<dbReference type="GO" id="GO:0019369">
    <property type="term" value="P:arachidonate metabolic process"/>
    <property type="evidence" value="ECO:0000314"/>
    <property type="project" value="MGI"/>
</dbReference>
<dbReference type="GO" id="GO:0043651">
    <property type="term" value="P:linoleic acid metabolic process"/>
    <property type="evidence" value="ECO:0000314"/>
    <property type="project" value="MGI"/>
</dbReference>
<dbReference type="CDD" id="cd20665">
    <property type="entry name" value="CYP2C-like"/>
    <property type="match status" value="1"/>
</dbReference>
<dbReference type="FunFam" id="1.10.630.10:FF:000299">
    <property type="entry name" value="Cytochrome P450 2C9"/>
    <property type="match status" value="1"/>
</dbReference>
<dbReference type="Gene3D" id="1.10.630.10">
    <property type="entry name" value="Cytochrome P450"/>
    <property type="match status" value="1"/>
</dbReference>
<dbReference type="InterPro" id="IPR001128">
    <property type="entry name" value="Cyt_P450"/>
</dbReference>
<dbReference type="InterPro" id="IPR017972">
    <property type="entry name" value="Cyt_P450_CS"/>
</dbReference>
<dbReference type="InterPro" id="IPR002401">
    <property type="entry name" value="Cyt_P450_E_grp-I"/>
</dbReference>
<dbReference type="InterPro" id="IPR036396">
    <property type="entry name" value="Cyt_P450_sf"/>
</dbReference>
<dbReference type="InterPro" id="IPR050182">
    <property type="entry name" value="Cytochrome_P450_fam2"/>
</dbReference>
<dbReference type="PANTHER" id="PTHR24300:SF384">
    <property type="entry name" value="CYTOCHROME P450 2C29-RELATED"/>
    <property type="match status" value="1"/>
</dbReference>
<dbReference type="PANTHER" id="PTHR24300">
    <property type="entry name" value="CYTOCHROME P450 508A4-RELATED"/>
    <property type="match status" value="1"/>
</dbReference>
<dbReference type="Pfam" id="PF00067">
    <property type="entry name" value="p450"/>
    <property type="match status" value="1"/>
</dbReference>
<dbReference type="PRINTS" id="PR00463">
    <property type="entry name" value="EP450I"/>
</dbReference>
<dbReference type="PRINTS" id="PR00385">
    <property type="entry name" value="P450"/>
</dbReference>
<dbReference type="SUPFAM" id="SSF48264">
    <property type="entry name" value="Cytochrome P450"/>
    <property type="match status" value="1"/>
</dbReference>
<dbReference type="PROSITE" id="PS00086">
    <property type="entry name" value="CYTOCHROME_P450"/>
    <property type="match status" value="1"/>
</dbReference>
<reference key="1">
    <citation type="journal article" date="2004" name="Mol. Pharmacol.">
        <title>Cloning, expression, and characterization of three new mouse cytochrome p450 enzymes and partial characterization of their fatty acid oxidation activities.</title>
        <authorList>
            <person name="Wang H."/>
            <person name="Zhao Y."/>
            <person name="Bradbury J.A."/>
            <person name="Graves J.P."/>
            <person name="Foley J."/>
            <person name="Blaisdell J.A."/>
            <person name="Goldstein J.A."/>
            <person name="Zeldin D.C."/>
        </authorList>
    </citation>
    <scope>NUCLEOTIDE SEQUENCE [MRNA]</scope>
    <scope>FUNCTION</scope>
    <scope>CATALYTIC ACTIVITY</scope>
    <scope>SUBCELLULAR LOCATION</scope>
    <scope>TISSUE SPECIFICITY</scope>
    <source>
        <strain evidence="8">C57BL/6J</strain>
        <tissue evidence="6">Liver</tissue>
    </source>
</reference>
<reference key="2">
    <citation type="journal article" date="2010" name="Cell">
        <title>A tissue-specific atlas of mouse protein phosphorylation and expression.</title>
        <authorList>
            <person name="Huttlin E.L."/>
            <person name="Jedrychowski M.P."/>
            <person name="Elias J.E."/>
            <person name="Goswami T."/>
            <person name="Rad R."/>
            <person name="Beausoleil S.A."/>
            <person name="Villen J."/>
            <person name="Haas W."/>
            <person name="Sowa M.E."/>
            <person name="Gygi S.P."/>
        </authorList>
    </citation>
    <scope>IDENTIFICATION BY MASS SPECTROMETRY [LARGE SCALE ANALYSIS]</scope>
    <source>
        <tissue>Liver</tissue>
    </source>
</reference>
<sequence>MDPILVLVLTLSCLFLLSLWRQSYERGKLPPGPTPLPIIGNILQIDVKDICQSFTNLSRVYGPVYTLYLGRKPTVVLHGYEAVKEALVDHGDVFAGRGRLPVFDKATNGMGIGFSNGSVWKNTRHFSLMTLRNLGMGKRSIEDRVQEEARCLVEELRKTNGSPCDPTFILGCAPCNVICSIIFQDRFDYKDRDFLNLLEKLDEISKILSTPWLQVCNTFPALLDYCPGSHNQFFKNYAYIKNFLLEKIREHKESLDVTIPRDFIDYFLIKGAQEDDNHPLKNNFEHLAITVTDLFIGGTESMSTTLRYALLLLLKYPHVTAKVQEEIEHVIGKHRRPCMQDRSHMPYTNAMIHEVQRFIDLVPNNLPHEVTCDIKFRNYFIPKGTTVITSLSSVLRDSKEFPNPEKFDPGHFLDENGKFKKSDYFMPFSTGKRICAGEGLARMELFLFLTSILQNFNLKPLVHPKDIDITPMLIGLGSVPPAFQLCFIPS</sequence>
<evidence type="ECO:0000250" key="1"/>
<evidence type="ECO:0000250" key="2">
    <source>
        <dbReference type="UniProtKB" id="P00176"/>
    </source>
</evidence>
<evidence type="ECO:0000250" key="3">
    <source>
        <dbReference type="UniProtKB" id="P10632"/>
    </source>
</evidence>
<evidence type="ECO:0000250" key="4">
    <source>
        <dbReference type="UniProtKB" id="Q64458"/>
    </source>
</evidence>
<evidence type="ECO:0000255" key="5"/>
<evidence type="ECO:0000269" key="6">
    <source>
    </source>
</evidence>
<evidence type="ECO:0000305" key="7"/>
<evidence type="ECO:0000312" key="8">
    <source>
        <dbReference type="EMBL" id="AAO52737.1"/>
    </source>
</evidence>
<name>CP254_MOUSE</name>
<comment type="function">
    <text evidence="6">Metabolizes arachidonic acid mainly to 12-hydroxyeicosatetraenoic acid (HETE).</text>
</comment>
<comment type="catalytic activity">
    <reaction evidence="6">
        <text>an organic molecule + reduced [NADPH--hemoprotein reductase] + O2 = an alcohol + oxidized [NADPH--hemoprotein reductase] + H2O + H(+)</text>
        <dbReference type="Rhea" id="RHEA:17149"/>
        <dbReference type="Rhea" id="RHEA-COMP:11964"/>
        <dbReference type="Rhea" id="RHEA-COMP:11965"/>
        <dbReference type="ChEBI" id="CHEBI:15377"/>
        <dbReference type="ChEBI" id="CHEBI:15378"/>
        <dbReference type="ChEBI" id="CHEBI:15379"/>
        <dbReference type="ChEBI" id="CHEBI:30879"/>
        <dbReference type="ChEBI" id="CHEBI:57618"/>
        <dbReference type="ChEBI" id="CHEBI:58210"/>
        <dbReference type="ChEBI" id="CHEBI:142491"/>
        <dbReference type="EC" id="1.14.14.1"/>
    </reaction>
</comment>
<comment type="cofactor">
    <cofactor evidence="1">
        <name>heme</name>
        <dbReference type="ChEBI" id="CHEBI:30413"/>
    </cofactor>
</comment>
<comment type="subcellular location">
    <subcellularLocation>
        <location evidence="6">Endoplasmic reticulum membrane</location>
        <topology evidence="6">Peripheral membrane protein</topology>
    </subcellularLocation>
    <subcellularLocation>
        <location evidence="6">Microsome membrane</location>
        <topology evidence="6">Peripheral membrane protein</topology>
    </subcellularLocation>
</comment>
<comment type="tissue specificity">
    <text evidence="6">Expressed in liver.</text>
</comment>
<comment type="induction">
    <text evidence="7">P450 can be induced to high levels in liver and other tissues by various foreign compounds, including drugs, pesticides, and carcinogens.</text>
</comment>
<comment type="similarity">
    <text evidence="5">Belongs to the cytochrome P450 family.</text>
</comment>
<protein>
    <recommendedName>
        <fullName>Cytochrome P450 2C54</fullName>
        <ecNumber evidence="6">1.14.14.1</ecNumber>
    </recommendedName>
    <alternativeName>
        <fullName>CYPIIC54</fullName>
    </alternativeName>
</protein>
<keyword id="KW-0007">Acetylation</keyword>
<keyword id="KW-0256">Endoplasmic reticulum</keyword>
<keyword id="KW-0349">Heme</keyword>
<keyword id="KW-0408">Iron</keyword>
<keyword id="KW-0472">Membrane</keyword>
<keyword id="KW-0479">Metal-binding</keyword>
<keyword id="KW-0492">Microsome</keyword>
<keyword id="KW-0503">Monooxygenase</keyword>
<keyword id="KW-0560">Oxidoreductase</keyword>
<keyword id="KW-0597">Phosphoprotein</keyword>
<keyword id="KW-1185">Reference proteome</keyword>
<gene>
    <name evidence="8" type="primary">Cyp2c54</name>
</gene>